<protein>
    <recommendedName>
        <fullName evidence="1">UPF0435 protein Sca_1453</fullName>
    </recommendedName>
</protein>
<comment type="similarity">
    <text evidence="1">Belongs to the UPF0435 family.</text>
</comment>
<accession>B9DMV6</accession>
<evidence type="ECO:0000255" key="1">
    <source>
        <dbReference type="HAMAP-Rule" id="MF_00829"/>
    </source>
</evidence>
<organism>
    <name type="scientific">Staphylococcus carnosus (strain TM300)</name>
    <dbReference type="NCBI Taxonomy" id="396513"/>
    <lineage>
        <taxon>Bacteria</taxon>
        <taxon>Bacillati</taxon>
        <taxon>Bacillota</taxon>
        <taxon>Bacilli</taxon>
        <taxon>Bacillales</taxon>
        <taxon>Staphylococcaceae</taxon>
        <taxon>Staphylococcus</taxon>
    </lineage>
</organism>
<name>Y1453_STACT</name>
<dbReference type="EMBL" id="AM295250">
    <property type="protein sequence ID" value="CAL28358.1"/>
    <property type="molecule type" value="Genomic_DNA"/>
</dbReference>
<dbReference type="RefSeq" id="WP_015900698.1">
    <property type="nucleotide sequence ID" value="NC_012121.1"/>
</dbReference>
<dbReference type="SMR" id="B9DMV6"/>
<dbReference type="GeneID" id="93793908"/>
<dbReference type="KEGG" id="sca:SCA_1453"/>
<dbReference type="eggNOG" id="COG4840">
    <property type="taxonomic scope" value="Bacteria"/>
</dbReference>
<dbReference type="HOGENOM" id="CLU_199533_0_0_9"/>
<dbReference type="OrthoDB" id="2404926at2"/>
<dbReference type="BioCyc" id="SCAR396513:SCA_RS07390-MONOMER"/>
<dbReference type="Proteomes" id="UP000000444">
    <property type="component" value="Chromosome"/>
</dbReference>
<dbReference type="HAMAP" id="MF_00829">
    <property type="entry name" value="UPF0435"/>
    <property type="match status" value="1"/>
</dbReference>
<dbReference type="InterPro" id="IPR009507">
    <property type="entry name" value="UPF0435"/>
</dbReference>
<dbReference type="Pfam" id="PF06569">
    <property type="entry name" value="DUF1128"/>
    <property type="match status" value="1"/>
</dbReference>
<reference key="1">
    <citation type="journal article" date="2009" name="Appl. Environ. Microbiol.">
        <title>Genome analysis of the meat starter culture bacterium Staphylococcus carnosus TM300.</title>
        <authorList>
            <person name="Rosenstein R."/>
            <person name="Nerz C."/>
            <person name="Biswas L."/>
            <person name="Resch A."/>
            <person name="Raddatz G."/>
            <person name="Schuster S.C."/>
            <person name="Goetz F."/>
        </authorList>
    </citation>
    <scope>NUCLEOTIDE SEQUENCE [LARGE SCALE GENOMIC DNA]</scope>
    <source>
        <strain>TM300</strain>
    </source>
</reference>
<proteinExistence type="inferred from homology"/>
<feature type="chain" id="PRO_1000148777" description="UPF0435 protein Sca_1453">
    <location>
        <begin position="1"/>
        <end position="68"/>
    </location>
</feature>
<keyword id="KW-1185">Reference proteome</keyword>
<gene>
    <name type="ordered locus">Sca_1453</name>
</gene>
<sequence length="68" mass="7723">MASNNKEMIEEIRKQLNVVNVQLIDPDKFEDADEEKVKEIHSFVTSKDNFSPSEVTAIASELGELRQS</sequence>